<name>YQBQ_BACSU</name>
<sequence length="326" mass="37049">MIELFVIKETEWLELVTESVSLEGQRYQAPRSITAKIITKQGTHSYYSVSEGDTVLFKWKGKELFRGIVFSRNPEEHWMTFTAYDMLQYLVKNKDVYVFSNQRADEIIKRLARDFQIPTTSIANTGYTIKSLVFKDDTSLYDMILKALKQTKSQTGRNYQLYSAKGKLGLRAWPDLSEVWVLETGVNITGYQYSTSINDTATKVKLRRQKDNKTYTATASDSSGISKYGVLQYVETVSDNINQAQLQERAKVKQAQKKGVKKELKSIQAIGIPDLQSGLPIYISIPEVGVKKTYWIDTDKHEFKGSTHTMTIDVVEKNSIPDGVSS</sequence>
<evidence type="ECO:0000305" key="1"/>
<proteinExistence type="predicted"/>
<comment type="similarity">
    <text evidence="1">To B.subtilis XkdQ.</text>
</comment>
<reference key="1">
    <citation type="journal article" date="1995" name="Microbiology">
        <title>Complete nucleotide sequence of a skin element excised by DNA rearrangement during sporulation in Bacillus subtilis.</title>
        <authorList>
            <person name="Takemaru K."/>
            <person name="Mizuno M."/>
            <person name="Sato T."/>
            <person name="Takeuchi M."/>
            <person name="Kobayashi Y."/>
        </authorList>
    </citation>
    <scope>NUCLEOTIDE SEQUENCE [GENOMIC DNA]</scope>
    <source>
        <strain>168 / JH642</strain>
    </source>
</reference>
<reference key="2">
    <citation type="journal article" date="1996" name="Microbiology">
        <title>Systematic sequencing of the 283 kb 210 degrees-232 degrees region of the Bacillus subtilis genome containing the skin element and many sporulation genes.</title>
        <authorList>
            <person name="Mizuno M."/>
            <person name="Masuda S."/>
            <person name="Takemaru K."/>
            <person name="Hosono S."/>
            <person name="Sato T."/>
            <person name="Takeuchi M."/>
            <person name="Kobayashi Y."/>
        </authorList>
    </citation>
    <scope>NUCLEOTIDE SEQUENCE [GENOMIC DNA]</scope>
    <source>
        <strain>168 / JH642</strain>
    </source>
</reference>
<reference key="3">
    <citation type="journal article" date="1997" name="Nature">
        <title>The complete genome sequence of the Gram-positive bacterium Bacillus subtilis.</title>
        <authorList>
            <person name="Kunst F."/>
            <person name="Ogasawara N."/>
            <person name="Moszer I."/>
            <person name="Albertini A.M."/>
            <person name="Alloni G."/>
            <person name="Azevedo V."/>
            <person name="Bertero M.G."/>
            <person name="Bessieres P."/>
            <person name="Bolotin A."/>
            <person name="Borchert S."/>
            <person name="Borriss R."/>
            <person name="Boursier L."/>
            <person name="Brans A."/>
            <person name="Braun M."/>
            <person name="Brignell S.C."/>
            <person name="Bron S."/>
            <person name="Brouillet S."/>
            <person name="Bruschi C.V."/>
            <person name="Caldwell B."/>
            <person name="Capuano V."/>
            <person name="Carter N.M."/>
            <person name="Choi S.-K."/>
            <person name="Codani J.-J."/>
            <person name="Connerton I.F."/>
            <person name="Cummings N.J."/>
            <person name="Daniel R.A."/>
            <person name="Denizot F."/>
            <person name="Devine K.M."/>
            <person name="Duesterhoeft A."/>
            <person name="Ehrlich S.D."/>
            <person name="Emmerson P.T."/>
            <person name="Entian K.-D."/>
            <person name="Errington J."/>
            <person name="Fabret C."/>
            <person name="Ferrari E."/>
            <person name="Foulger D."/>
            <person name="Fritz C."/>
            <person name="Fujita M."/>
            <person name="Fujita Y."/>
            <person name="Fuma S."/>
            <person name="Galizzi A."/>
            <person name="Galleron N."/>
            <person name="Ghim S.-Y."/>
            <person name="Glaser P."/>
            <person name="Goffeau A."/>
            <person name="Golightly E.J."/>
            <person name="Grandi G."/>
            <person name="Guiseppi G."/>
            <person name="Guy B.J."/>
            <person name="Haga K."/>
            <person name="Haiech J."/>
            <person name="Harwood C.R."/>
            <person name="Henaut A."/>
            <person name="Hilbert H."/>
            <person name="Holsappel S."/>
            <person name="Hosono S."/>
            <person name="Hullo M.-F."/>
            <person name="Itaya M."/>
            <person name="Jones L.-M."/>
            <person name="Joris B."/>
            <person name="Karamata D."/>
            <person name="Kasahara Y."/>
            <person name="Klaerr-Blanchard M."/>
            <person name="Klein C."/>
            <person name="Kobayashi Y."/>
            <person name="Koetter P."/>
            <person name="Koningstein G."/>
            <person name="Krogh S."/>
            <person name="Kumano M."/>
            <person name="Kurita K."/>
            <person name="Lapidus A."/>
            <person name="Lardinois S."/>
            <person name="Lauber J."/>
            <person name="Lazarevic V."/>
            <person name="Lee S.-M."/>
            <person name="Levine A."/>
            <person name="Liu H."/>
            <person name="Masuda S."/>
            <person name="Mauel C."/>
            <person name="Medigue C."/>
            <person name="Medina N."/>
            <person name="Mellado R.P."/>
            <person name="Mizuno M."/>
            <person name="Moestl D."/>
            <person name="Nakai S."/>
            <person name="Noback M."/>
            <person name="Noone D."/>
            <person name="O'Reilly M."/>
            <person name="Ogawa K."/>
            <person name="Ogiwara A."/>
            <person name="Oudega B."/>
            <person name="Park S.-H."/>
            <person name="Parro V."/>
            <person name="Pohl T.M."/>
            <person name="Portetelle D."/>
            <person name="Porwollik S."/>
            <person name="Prescott A.M."/>
            <person name="Presecan E."/>
            <person name="Pujic P."/>
            <person name="Purnelle B."/>
            <person name="Rapoport G."/>
            <person name="Rey M."/>
            <person name="Reynolds S."/>
            <person name="Rieger M."/>
            <person name="Rivolta C."/>
            <person name="Rocha E."/>
            <person name="Roche B."/>
            <person name="Rose M."/>
            <person name="Sadaie Y."/>
            <person name="Sato T."/>
            <person name="Scanlan E."/>
            <person name="Schleich S."/>
            <person name="Schroeter R."/>
            <person name="Scoffone F."/>
            <person name="Sekiguchi J."/>
            <person name="Sekowska A."/>
            <person name="Seror S.J."/>
            <person name="Serror P."/>
            <person name="Shin B.-S."/>
            <person name="Soldo B."/>
            <person name="Sorokin A."/>
            <person name="Tacconi E."/>
            <person name="Takagi T."/>
            <person name="Takahashi H."/>
            <person name="Takemaru K."/>
            <person name="Takeuchi M."/>
            <person name="Tamakoshi A."/>
            <person name="Tanaka T."/>
            <person name="Terpstra P."/>
            <person name="Tognoni A."/>
            <person name="Tosato V."/>
            <person name="Uchiyama S."/>
            <person name="Vandenbol M."/>
            <person name="Vannier F."/>
            <person name="Vassarotti A."/>
            <person name="Viari A."/>
            <person name="Wambutt R."/>
            <person name="Wedler E."/>
            <person name="Wedler H."/>
            <person name="Weitzenegger T."/>
            <person name="Winters P."/>
            <person name="Wipat A."/>
            <person name="Yamamoto H."/>
            <person name="Yamane K."/>
            <person name="Yasumoto K."/>
            <person name="Yata K."/>
            <person name="Yoshida K."/>
            <person name="Yoshikawa H.-F."/>
            <person name="Zumstein E."/>
            <person name="Yoshikawa H."/>
            <person name="Danchin A."/>
        </authorList>
    </citation>
    <scope>NUCLEOTIDE SEQUENCE [LARGE SCALE GENOMIC DNA]</scope>
    <source>
        <strain>168</strain>
    </source>
</reference>
<reference key="4">
    <citation type="journal article" date="1995" name="Gene">
        <title>Analysis of a Bacillus subtilis genome fragment using a co-operative computer system prototype.</title>
        <authorList>
            <person name="Medigue C."/>
            <person name="Moszer I."/>
            <person name="Viari A."/>
            <person name="Danchin A."/>
        </authorList>
    </citation>
    <scope>IDENTIFICATION</scope>
</reference>
<organism>
    <name type="scientific">Bacillus subtilis (strain 168)</name>
    <dbReference type="NCBI Taxonomy" id="224308"/>
    <lineage>
        <taxon>Bacteria</taxon>
        <taxon>Bacillati</taxon>
        <taxon>Bacillota</taxon>
        <taxon>Bacilli</taxon>
        <taxon>Bacillales</taxon>
        <taxon>Bacillaceae</taxon>
        <taxon>Bacillus</taxon>
    </lineage>
</organism>
<gene>
    <name type="primary">yqbQ</name>
    <name type="ordered locus">BSU26010</name>
</gene>
<protein>
    <recommendedName>
        <fullName>Uncharacterized protein YqbQ</fullName>
    </recommendedName>
</protein>
<accession>P45950</accession>
<keyword id="KW-1185">Reference proteome</keyword>
<feature type="chain" id="PRO_0000049768" description="Uncharacterized protein YqbQ">
    <location>
        <begin position="1"/>
        <end position="326"/>
    </location>
</feature>
<dbReference type="EMBL" id="D32216">
    <property type="protein sequence ID" value="BAA06949.1"/>
    <property type="molecule type" value="Genomic_DNA"/>
</dbReference>
<dbReference type="EMBL" id="D84432">
    <property type="protein sequence ID" value="BAA12413.1"/>
    <property type="molecule type" value="Genomic_DNA"/>
</dbReference>
<dbReference type="EMBL" id="AL009126">
    <property type="protein sequence ID" value="CAB14542.1"/>
    <property type="molecule type" value="Genomic_DNA"/>
</dbReference>
<dbReference type="PIR" id="D69948">
    <property type="entry name" value="D69948"/>
</dbReference>
<dbReference type="RefSeq" id="NP_390478.1">
    <property type="nucleotide sequence ID" value="NC_000964.3"/>
</dbReference>
<dbReference type="RefSeq" id="WP_004398524.1">
    <property type="nucleotide sequence ID" value="NZ_OZ025638.1"/>
</dbReference>
<dbReference type="SMR" id="P45950"/>
<dbReference type="FunCoup" id="P45950">
    <property type="interactions" value="70"/>
</dbReference>
<dbReference type="STRING" id="224308.BSU26010"/>
<dbReference type="PaxDb" id="224308-BSU26010"/>
<dbReference type="EnsemblBacteria" id="CAB14542">
    <property type="protein sequence ID" value="CAB14542"/>
    <property type="gene ID" value="BSU_26010"/>
</dbReference>
<dbReference type="GeneID" id="937751"/>
<dbReference type="KEGG" id="bsu:BSU26010"/>
<dbReference type="PATRIC" id="fig|224308.179.peg.2826"/>
<dbReference type="eggNOG" id="COG4193">
    <property type="taxonomic scope" value="Bacteria"/>
</dbReference>
<dbReference type="InParanoid" id="P45950"/>
<dbReference type="OrthoDB" id="1698671at2"/>
<dbReference type="PhylomeDB" id="P45950"/>
<dbReference type="BioCyc" id="BSUB:BSU26010-MONOMER"/>
<dbReference type="Proteomes" id="UP000001570">
    <property type="component" value="Chromosome"/>
</dbReference>
<dbReference type="InterPro" id="IPR052196">
    <property type="entry name" value="Bact_Kbp"/>
</dbReference>
<dbReference type="InterPro" id="IPR056937">
    <property type="entry name" value="YQBQ-like_dom"/>
</dbReference>
<dbReference type="PANTHER" id="PTHR34700:SF3">
    <property type="entry name" value="PHAGE-LIKE ELEMENT PBSX PROTEIN XKDQ"/>
    <property type="match status" value="1"/>
</dbReference>
<dbReference type="PANTHER" id="PTHR34700">
    <property type="entry name" value="POTASSIUM BINDING PROTEIN KBP"/>
    <property type="match status" value="1"/>
</dbReference>
<dbReference type="Pfam" id="PF24032">
    <property type="entry name" value="YQBQ"/>
    <property type="match status" value="1"/>
</dbReference>
<dbReference type="SUPFAM" id="SSF69279">
    <property type="entry name" value="Phage tail proteins"/>
    <property type="match status" value="1"/>
</dbReference>